<keyword id="KW-0963">Cytoplasm</keyword>
<keyword id="KW-0346">Stress response</keyword>
<reference key="1">
    <citation type="journal article" date="1992" name="Eur. J. Cell Biol.">
        <title>Low molecular mass heat-shock proteins of a light-resistant photoautotrophic cell culture.</title>
        <authorList>
            <person name="Knack G."/>
            <person name="Liu Z."/>
            <person name="Kloppstech K."/>
        </authorList>
    </citation>
    <scope>NUCLEOTIDE SEQUENCE [MRNA]</scope>
</reference>
<feature type="chain" id="PRO_0000125973" description="18.3 kDa class I heat shock protein">
    <location>
        <begin position="1"/>
        <end position="161"/>
    </location>
</feature>
<feature type="domain" description="sHSP" evidence="1">
    <location>
        <begin position="48"/>
        <end position="161"/>
    </location>
</feature>
<name>HSP11_OXYRB</name>
<organism>
    <name type="scientific">Oxybasis rubra</name>
    <name type="common">Red goosefoot</name>
    <name type="synonym">Chenopodium rubrum</name>
    <dbReference type="NCBI Taxonomy" id="3560"/>
    <lineage>
        <taxon>Eukaryota</taxon>
        <taxon>Viridiplantae</taxon>
        <taxon>Streptophyta</taxon>
        <taxon>Embryophyta</taxon>
        <taxon>Tracheophyta</taxon>
        <taxon>Spermatophyta</taxon>
        <taxon>Magnoliopsida</taxon>
        <taxon>eudicotyledons</taxon>
        <taxon>Gunneridae</taxon>
        <taxon>Pentapetalae</taxon>
        <taxon>Caryophyllales</taxon>
        <taxon>Chenopodiaceae</taxon>
        <taxon>Chenopodioideae</taxon>
        <taxon>Atripliceae</taxon>
        <taxon>Oxybasis</taxon>
    </lineage>
</organism>
<accession>Q05832</accession>
<evidence type="ECO:0000255" key="1">
    <source>
        <dbReference type="PROSITE-ProRule" id="PRU00285"/>
    </source>
</evidence>
<sequence>MSLIPNNWFNTGRRSNIFDPFSLDEIWDPFFGLPSTLSTVPRSETAAETAAFANARIDWKETPEAHVFKADLPGVKKEEVKVEVEDGNVLRISGQRAREKEEKNDTWHRVERSSGQFMRKFRLPENAKVDQVKAGMENGVLTVTVPKNEAPKPQVKAINVY</sequence>
<dbReference type="EMBL" id="X53870">
    <property type="protein sequence ID" value="CAA37864.1"/>
    <property type="molecule type" value="mRNA"/>
</dbReference>
<dbReference type="PIR" id="S33566">
    <property type="entry name" value="S33566"/>
</dbReference>
<dbReference type="SMR" id="Q05832"/>
<dbReference type="GO" id="GO:0005737">
    <property type="term" value="C:cytoplasm"/>
    <property type="evidence" value="ECO:0007669"/>
    <property type="project" value="UniProtKB-SubCell"/>
</dbReference>
<dbReference type="CDD" id="cd06472">
    <property type="entry name" value="ACD_ScHsp26_like"/>
    <property type="match status" value="1"/>
</dbReference>
<dbReference type="FunFam" id="2.60.40.790:FF:000009">
    <property type="entry name" value="17.6 kDa class I heat shock protein-like"/>
    <property type="match status" value="1"/>
</dbReference>
<dbReference type="Gene3D" id="2.60.40.790">
    <property type="match status" value="1"/>
</dbReference>
<dbReference type="InterPro" id="IPR002068">
    <property type="entry name" value="A-crystallin/Hsp20_dom"/>
</dbReference>
<dbReference type="InterPro" id="IPR008978">
    <property type="entry name" value="HSP20-like_chaperone"/>
</dbReference>
<dbReference type="InterPro" id="IPR031107">
    <property type="entry name" value="Small_HSP"/>
</dbReference>
<dbReference type="PANTHER" id="PTHR11527">
    <property type="entry name" value="HEAT-SHOCK PROTEIN 20 FAMILY MEMBER"/>
    <property type="match status" value="1"/>
</dbReference>
<dbReference type="Pfam" id="PF00011">
    <property type="entry name" value="HSP20"/>
    <property type="match status" value="1"/>
</dbReference>
<dbReference type="SUPFAM" id="SSF49764">
    <property type="entry name" value="HSP20-like chaperones"/>
    <property type="match status" value="1"/>
</dbReference>
<dbReference type="PROSITE" id="PS01031">
    <property type="entry name" value="SHSP"/>
    <property type="match status" value="1"/>
</dbReference>
<protein>
    <recommendedName>
        <fullName>18.3 kDa class I heat shock protein</fullName>
    </recommendedName>
    <alternativeName>
        <fullName>HSP 18.3</fullName>
    </alternativeName>
</protein>
<proteinExistence type="evidence at transcript level"/>
<gene>
    <name type="primary">HSP18</name>
</gene>
<comment type="subunit">
    <text>Forms oligomeric structures.</text>
</comment>
<comment type="subcellular location">
    <subcellularLocation>
        <location>Cytoplasm</location>
    </subcellularLocation>
</comment>
<comment type="similarity">
    <text evidence="1">Belongs to the small heat shock protein (HSP20) family.</text>
</comment>